<keyword id="KW-0249">Electron transport</keyword>
<keyword id="KW-0349">Heme</keyword>
<keyword id="KW-0408">Iron</keyword>
<keyword id="KW-0472">Membrane</keyword>
<keyword id="KW-0479">Metal-binding</keyword>
<keyword id="KW-0496">Mitochondrion</keyword>
<keyword id="KW-0999">Mitochondrion inner membrane</keyword>
<keyword id="KW-0679">Respiratory chain</keyword>
<keyword id="KW-0812">Transmembrane</keyword>
<keyword id="KW-1133">Transmembrane helix</keyword>
<keyword id="KW-0813">Transport</keyword>
<keyword id="KW-0830">Ubiquinone</keyword>
<name>CYB_DASSP</name>
<feature type="chain" id="PRO_0000060870" description="Cytochrome b">
    <location>
        <begin position="1"/>
        <end position="381"/>
    </location>
</feature>
<feature type="transmembrane region" description="Helical" evidence="2">
    <location>
        <begin position="33"/>
        <end position="53"/>
    </location>
</feature>
<feature type="transmembrane region" description="Helical" evidence="2">
    <location>
        <begin position="77"/>
        <end position="98"/>
    </location>
</feature>
<feature type="transmembrane region" description="Helical" evidence="2">
    <location>
        <begin position="113"/>
        <end position="133"/>
    </location>
</feature>
<feature type="transmembrane region" description="Helical" evidence="2">
    <location>
        <begin position="178"/>
        <end position="198"/>
    </location>
</feature>
<feature type="transmembrane region" description="Helical" evidence="2">
    <location>
        <begin position="226"/>
        <end position="246"/>
    </location>
</feature>
<feature type="transmembrane region" description="Helical" evidence="2">
    <location>
        <begin position="288"/>
        <end position="308"/>
    </location>
</feature>
<feature type="transmembrane region" description="Helical" evidence="2">
    <location>
        <begin position="320"/>
        <end position="340"/>
    </location>
</feature>
<feature type="transmembrane region" description="Helical" evidence="2">
    <location>
        <begin position="347"/>
        <end position="367"/>
    </location>
</feature>
<feature type="binding site" description="axial binding residue" evidence="2">
    <location>
        <position position="83"/>
    </location>
    <ligand>
        <name>heme b</name>
        <dbReference type="ChEBI" id="CHEBI:60344"/>
        <label>b562</label>
    </ligand>
    <ligandPart>
        <name>Fe</name>
        <dbReference type="ChEBI" id="CHEBI:18248"/>
    </ligandPart>
</feature>
<feature type="binding site" description="axial binding residue" evidence="2">
    <location>
        <position position="97"/>
    </location>
    <ligand>
        <name>heme b</name>
        <dbReference type="ChEBI" id="CHEBI:60344"/>
        <label>b566</label>
    </ligand>
    <ligandPart>
        <name>Fe</name>
        <dbReference type="ChEBI" id="CHEBI:18248"/>
    </ligandPart>
</feature>
<feature type="binding site" description="axial binding residue" evidence="2">
    <location>
        <position position="182"/>
    </location>
    <ligand>
        <name>heme b</name>
        <dbReference type="ChEBI" id="CHEBI:60344"/>
        <label>b562</label>
    </ligand>
    <ligandPart>
        <name>Fe</name>
        <dbReference type="ChEBI" id="CHEBI:18248"/>
    </ligandPart>
</feature>
<feature type="binding site" description="axial binding residue" evidence="2">
    <location>
        <position position="196"/>
    </location>
    <ligand>
        <name>heme b</name>
        <dbReference type="ChEBI" id="CHEBI:60344"/>
        <label>b566</label>
    </ligand>
    <ligandPart>
        <name>Fe</name>
        <dbReference type="ChEBI" id="CHEBI:18248"/>
    </ligandPart>
</feature>
<feature type="binding site" evidence="2">
    <location>
        <position position="201"/>
    </location>
    <ligand>
        <name>a ubiquinone</name>
        <dbReference type="ChEBI" id="CHEBI:16389"/>
    </ligand>
</feature>
<reference key="1">
    <citation type="journal article" date="1994" name="J. Mammal. Evol.">
        <title>Phylogenetic structure of the marsupial family Dasyuridae based on cytochrome-b DNA sequences.</title>
        <authorList>
            <person name="Krajewski C."/>
            <person name="Painter J."/>
            <person name="Buckley L."/>
            <person name="Westerman M."/>
        </authorList>
    </citation>
    <scope>NUCLEOTIDE SEQUENCE [GENOMIC DNA]</scope>
</reference>
<sequence length="381" mass="43000">MINMRKTHPLLKIINHSFIDLPAPSNISAWWNFGSLLGVCLIIQILTGLFLAMHYTSDTLTAFSSVAHICRDVNYGWLLRNLHANGASMFFMCLFLHVGRGIYYGSYLYKETWNIGVILLLTVMAMAFVGYVLPWGQMSFWGATVITNLLSAIPYIGTTLAEWIWGGFAVDKATLTRFFAFHFILPFIIMALAIVHLLFLHETGSNNPSGINPDSDKIPFHPYYTIKDALGFMFLLLILLLLALFSPDLLGDPDNFSPANPLNTPPHIKPEWYFLFAYAILRSIPNKLGGVLALLASILILLIIPLLHTANQRSMMFRPVSQTLFWILTANLMTLTWIGGQPVEQPFIIIGQLASMLYFTLILVLMLFAGLFENYMLKPKW</sequence>
<evidence type="ECO:0000250" key="1"/>
<evidence type="ECO:0000250" key="2">
    <source>
        <dbReference type="UniProtKB" id="P00157"/>
    </source>
</evidence>
<evidence type="ECO:0000255" key="3">
    <source>
        <dbReference type="PROSITE-ProRule" id="PRU00967"/>
    </source>
</evidence>
<evidence type="ECO:0000255" key="4">
    <source>
        <dbReference type="PROSITE-ProRule" id="PRU00968"/>
    </source>
</evidence>
<comment type="function">
    <text evidence="2">Component of the ubiquinol-cytochrome c reductase complex (complex III or cytochrome b-c1 complex) that is part of the mitochondrial respiratory chain. The b-c1 complex mediates electron transfer from ubiquinol to cytochrome c. Contributes to the generation of a proton gradient across the mitochondrial membrane that is then used for ATP synthesis.</text>
</comment>
<comment type="cofactor">
    <cofactor evidence="2">
        <name>heme b</name>
        <dbReference type="ChEBI" id="CHEBI:60344"/>
    </cofactor>
    <text evidence="2">Binds 2 heme b groups non-covalently.</text>
</comment>
<comment type="subunit">
    <text evidence="2">The cytochrome bc1 complex contains 11 subunits: 3 respiratory subunits (MT-CYB, CYC1 and UQCRFS1), 2 core proteins (UQCRC1 and UQCRC2) and 6 low-molecular weight proteins (UQCRH/QCR6, UQCRB/QCR7, UQCRQ/QCR8, UQCR10/QCR9, UQCR11/QCR10 and a cleavage product of UQCRFS1). This cytochrome bc1 complex then forms a dimer.</text>
</comment>
<comment type="subcellular location">
    <subcellularLocation>
        <location evidence="2">Mitochondrion inner membrane</location>
        <topology evidence="2">Multi-pass membrane protein</topology>
    </subcellularLocation>
</comment>
<comment type="miscellaneous">
    <text evidence="1">Heme 1 (or BL or b562) is low-potential and absorbs at about 562 nm, and heme 2 (or BH or b566) is high-potential and absorbs at about 566 nm.</text>
</comment>
<comment type="similarity">
    <text evidence="3 4">Belongs to the cytochrome b family.</text>
</comment>
<comment type="caution">
    <text evidence="2">The full-length protein contains only eight transmembrane helices, not nine as predicted by bioinformatics tools.</text>
</comment>
<dbReference type="EMBL" id="U07581">
    <property type="protein sequence ID" value="AAB88759.1"/>
    <property type="molecule type" value="Genomic_DNA"/>
</dbReference>
<dbReference type="SMR" id="Q34382"/>
<dbReference type="GO" id="GO:0005743">
    <property type="term" value="C:mitochondrial inner membrane"/>
    <property type="evidence" value="ECO:0007669"/>
    <property type="project" value="UniProtKB-SubCell"/>
</dbReference>
<dbReference type="GO" id="GO:0045275">
    <property type="term" value="C:respiratory chain complex III"/>
    <property type="evidence" value="ECO:0007669"/>
    <property type="project" value="InterPro"/>
</dbReference>
<dbReference type="GO" id="GO:0046872">
    <property type="term" value="F:metal ion binding"/>
    <property type="evidence" value="ECO:0007669"/>
    <property type="project" value="UniProtKB-KW"/>
</dbReference>
<dbReference type="GO" id="GO:0008121">
    <property type="term" value="F:ubiquinol-cytochrome-c reductase activity"/>
    <property type="evidence" value="ECO:0007669"/>
    <property type="project" value="InterPro"/>
</dbReference>
<dbReference type="GO" id="GO:0006122">
    <property type="term" value="P:mitochondrial electron transport, ubiquinol to cytochrome c"/>
    <property type="evidence" value="ECO:0007669"/>
    <property type="project" value="TreeGrafter"/>
</dbReference>
<dbReference type="CDD" id="cd00290">
    <property type="entry name" value="cytochrome_b_C"/>
    <property type="match status" value="1"/>
</dbReference>
<dbReference type="CDD" id="cd00284">
    <property type="entry name" value="Cytochrome_b_N"/>
    <property type="match status" value="1"/>
</dbReference>
<dbReference type="FunFam" id="1.20.810.10:FF:000002">
    <property type="entry name" value="Cytochrome b"/>
    <property type="match status" value="1"/>
</dbReference>
<dbReference type="Gene3D" id="1.20.810.10">
    <property type="entry name" value="Cytochrome Bc1 Complex, Chain C"/>
    <property type="match status" value="1"/>
</dbReference>
<dbReference type="InterPro" id="IPR005798">
    <property type="entry name" value="Cyt_b/b6_C"/>
</dbReference>
<dbReference type="InterPro" id="IPR036150">
    <property type="entry name" value="Cyt_b/b6_C_sf"/>
</dbReference>
<dbReference type="InterPro" id="IPR005797">
    <property type="entry name" value="Cyt_b/b6_N"/>
</dbReference>
<dbReference type="InterPro" id="IPR027387">
    <property type="entry name" value="Cytb/b6-like_sf"/>
</dbReference>
<dbReference type="InterPro" id="IPR030689">
    <property type="entry name" value="Cytochrome_b"/>
</dbReference>
<dbReference type="InterPro" id="IPR048260">
    <property type="entry name" value="Cytochrome_b_C_euk/bac"/>
</dbReference>
<dbReference type="InterPro" id="IPR048259">
    <property type="entry name" value="Cytochrome_b_N_euk/bac"/>
</dbReference>
<dbReference type="InterPro" id="IPR016174">
    <property type="entry name" value="Di-haem_cyt_TM"/>
</dbReference>
<dbReference type="PANTHER" id="PTHR19271">
    <property type="entry name" value="CYTOCHROME B"/>
    <property type="match status" value="1"/>
</dbReference>
<dbReference type="PANTHER" id="PTHR19271:SF16">
    <property type="entry name" value="CYTOCHROME B"/>
    <property type="match status" value="1"/>
</dbReference>
<dbReference type="Pfam" id="PF00032">
    <property type="entry name" value="Cytochrom_B_C"/>
    <property type="match status" value="1"/>
</dbReference>
<dbReference type="Pfam" id="PF00033">
    <property type="entry name" value="Cytochrome_B"/>
    <property type="match status" value="1"/>
</dbReference>
<dbReference type="PIRSF" id="PIRSF038885">
    <property type="entry name" value="COB"/>
    <property type="match status" value="1"/>
</dbReference>
<dbReference type="SUPFAM" id="SSF81648">
    <property type="entry name" value="a domain/subunit of cytochrome bc1 complex (Ubiquinol-cytochrome c reductase)"/>
    <property type="match status" value="1"/>
</dbReference>
<dbReference type="SUPFAM" id="SSF81342">
    <property type="entry name" value="Transmembrane di-heme cytochromes"/>
    <property type="match status" value="1"/>
</dbReference>
<dbReference type="PROSITE" id="PS51003">
    <property type="entry name" value="CYTB_CTER"/>
    <property type="match status" value="1"/>
</dbReference>
<dbReference type="PROSITE" id="PS51002">
    <property type="entry name" value="CYTB_NTER"/>
    <property type="match status" value="1"/>
</dbReference>
<protein>
    <recommendedName>
        <fullName>Cytochrome b</fullName>
    </recommendedName>
    <alternativeName>
        <fullName>Complex III subunit 3</fullName>
    </alternativeName>
    <alternativeName>
        <fullName>Complex III subunit III</fullName>
    </alternativeName>
    <alternativeName>
        <fullName>Cytochrome b-c1 complex subunit 3</fullName>
    </alternativeName>
    <alternativeName>
        <fullName>Ubiquinol-cytochrome-c reductase complex cytochrome b subunit</fullName>
    </alternativeName>
</protein>
<accession>Q34382</accession>
<geneLocation type="mitochondrion"/>
<organism>
    <name type="scientific">Dasyurus spartacus</name>
    <name type="common">Bronze quoll</name>
    <name type="synonym">Satanellus spartacus</name>
    <dbReference type="NCBI Taxonomy" id="32546"/>
    <lineage>
        <taxon>Eukaryota</taxon>
        <taxon>Metazoa</taxon>
        <taxon>Chordata</taxon>
        <taxon>Craniata</taxon>
        <taxon>Vertebrata</taxon>
        <taxon>Euteleostomi</taxon>
        <taxon>Mammalia</taxon>
        <taxon>Metatheria</taxon>
        <taxon>Dasyuromorphia</taxon>
        <taxon>Dasyuridae</taxon>
        <taxon>Dasyurus</taxon>
    </lineage>
</organism>
<gene>
    <name type="primary">MT-CYB</name>
    <name type="synonym">COB</name>
    <name type="synonym">CYTB</name>
    <name type="synonym">MTCYB</name>
</gene>
<proteinExistence type="inferred from homology"/>